<keyword id="KW-0687">Ribonucleoprotein</keyword>
<keyword id="KW-0689">Ribosomal protein</keyword>
<keyword id="KW-0694">RNA-binding</keyword>
<keyword id="KW-0699">rRNA-binding</keyword>
<comment type="function">
    <text evidence="1">One of the primary rRNA binding proteins, it binds directly to 16S rRNA central domain where it helps coordinate assembly of the platform of the 30S subunit.</text>
</comment>
<comment type="subunit">
    <text evidence="1">Part of the 30S ribosomal subunit. Contacts proteins S5 and S12.</text>
</comment>
<comment type="similarity">
    <text evidence="1">Belongs to the universal ribosomal protein uS8 family.</text>
</comment>
<sequence length="130" mass="14040">MSMQDPIADMLTRIRNGQAANKVSVKMPSAKLKVAIAKLLKEEGYIADYAVADEAKPELEITLKYFQGQPVVETIQRVSRPGLRIYKGKNELPKVMGGLGVAIVSTSKGLMTDRAARLAGMGGEVICYVA</sequence>
<proteinExistence type="inferred from homology"/>
<gene>
    <name evidence="1" type="primary">rpsH</name>
    <name type="ordered locus">Shewmr4_0213</name>
</gene>
<dbReference type="EMBL" id="CP000446">
    <property type="protein sequence ID" value="ABI37294.1"/>
    <property type="molecule type" value="Genomic_DNA"/>
</dbReference>
<dbReference type="RefSeq" id="WP_007644434.1">
    <property type="nucleotide sequence ID" value="NC_008321.1"/>
</dbReference>
<dbReference type="SMR" id="Q0HNS3"/>
<dbReference type="GeneID" id="94726200"/>
<dbReference type="KEGG" id="she:Shewmr4_0213"/>
<dbReference type="HOGENOM" id="CLU_098428_0_0_6"/>
<dbReference type="GO" id="GO:1990904">
    <property type="term" value="C:ribonucleoprotein complex"/>
    <property type="evidence" value="ECO:0007669"/>
    <property type="project" value="UniProtKB-KW"/>
</dbReference>
<dbReference type="GO" id="GO:0005840">
    <property type="term" value="C:ribosome"/>
    <property type="evidence" value="ECO:0007669"/>
    <property type="project" value="UniProtKB-KW"/>
</dbReference>
<dbReference type="GO" id="GO:0019843">
    <property type="term" value="F:rRNA binding"/>
    <property type="evidence" value="ECO:0007669"/>
    <property type="project" value="UniProtKB-UniRule"/>
</dbReference>
<dbReference type="GO" id="GO:0003735">
    <property type="term" value="F:structural constituent of ribosome"/>
    <property type="evidence" value="ECO:0007669"/>
    <property type="project" value="InterPro"/>
</dbReference>
<dbReference type="GO" id="GO:0006412">
    <property type="term" value="P:translation"/>
    <property type="evidence" value="ECO:0007669"/>
    <property type="project" value="UniProtKB-UniRule"/>
</dbReference>
<dbReference type="FunFam" id="3.30.1370.30:FF:000003">
    <property type="entry name" value="30S ribosomal protein S8"/>
    <property type="match status" value="1"/>
</dbReference>
<dbReference type="FunFam" id="3.30.1490.10:FF:000001">
    <property type="entry name" value="30S ribosomal protein S8"/>
    <property type="match status" value="1"/>
</dbReference>
<dbReference type="Gene3D" id="3.30.1370.30">
    <property type="match status" value="1"/>
</dbReference>
<dbReference type="Gene3D" id="3.30.1490.10">
    <property type="match status" value="1"/>
</dbReference>
<dbReference type="HAMAP" id="MF_01302_B">
    <property type="entry name" value="Ribosomal_uS8_B"/>
    <property type="match status" value="1"/>
</dbReference>
<dbReference type="InterPro" id="IPR000630">
    <property type="entry name" value="Ribosomal_uS8"/>
</dbReference>
<dbReference type="InterPro" id="IPR047863">
    <property type="entry name" value="Ribosomal_uS8_CS"/>
</dbReference>
<dbReference type="InterPro" id="IPR035987">
    <property type="entry name" value="Ribosomal_uS8_sf"/>
</dbReference>
<dbReference type="NCBIfam" id="NF001109">
    <property type="entry name" value="PRK00136.1"/>
    <property type="match status" value="1"/>
</dbReference>
<dbReference type="PANTHER" id="PTHR11758">
    <property type="entry name" value="40S RIBOSOMAL PROTEIN S15A"/>
    <property type="match status" value="1"/>
</dbReference>
<dbReference type="Pfam" id="PF00410">
    <property type="entry name" value="Ribosomal_S8"/>
    <property type="match status" value="1"/>
</dbReference>
<dbReference type="SUPFAM" id="SSF56047">
    <property type="entry name" value="Ribosomal protein S8"/>
    <property type="match status" value="1"/>
</dbReference>
<dbReference type="PROSITE" id="PS00053">
    <property type="entry name" value="RIBOSOMAL_S8"/>
    <property type="match status" value="1"/>
</dbReference>
<accession>Q0HNS3</accession>
<reference key="1">
    <citation type="submission" date="2006-08" db="EMBL/GenBank/DDBJ databases">
        <title>Complete sequence of Shewanella sp. MR-4.</title>
        <authorList>
            <consortium name="US DOE Joint Genome Institute"/>
            <person name="Copeland A."/>
            <person name="Lucas S."/>
            <person name="Lapidus A."/>
            <person name="Barry K."/>
            <person name="Detter J.C."/>
            <person name="Glavina del Rio T."/>
            <person name="Hammon N."/>
            <person name="Israni S."/>
            <person name="Dalin E."/>
            <person name="Tice H."/>
            <person name="Pitluck S."/>
            <person name="Kiss H."/>
            <person name="Brettin T."/>
            <person name="Bruce D."/>
            <person name="Han C."/>
            <person name="Tapia R."/>
            <person name="Gilna P."/>
            <person name="Schmutz J."/>
            <person name="Larimer F."/>
            <person name="Land M."/>
            <person name="Hauser L."/>
            <person name="Kyrpides N."/>
            <person name="Mikhailova N."/>
            <person name="Nealson K."/>
            <person name="Konstantinidis K."/>
            <person name="Klappenbach J."/>
            <person name="Tiedje J."/>
            <person name="Richardson P."/>
        </authorList>
    </citation>
    <scope>NUCLEOTIDE SEQUENCE [LARGE SCALE GENOMIC DNA]</scope>
    <source>
        <strain>MR-4</strain>
    </source>
</reference>
<organism>
    <name type="scientific">Shewanella sp. (strain MR-4)</name>
    <dbReference type="NCBI Taxonomy" id="60480"/>
    <lineage>
        <taxon>Bacteria</taxon>
        <taxon>Pseudomonadati</taxon>
        <taxon>Pseudomonadota</taxon>
        <taxon>Gammaproteobacteria</taxon>
        <taxon>Alteromonadales</taxon>
        <taxon>Shewanellaceae</taxon>
        <taxon>Shewanella</taxon>
    </lineage>
</organism>
<evidence type="ECO:0000255" key="1">
    <source>
        <dbReference type="HAMAP-Rule" id="MF_01302"/>
    </source>
</evidence>
<evidence type="ECO:0000305" key="2"/>
<protein>
    <recommendedName>
        <fullName evidence="1">Small ribosomal subunit protein uS8</fullName>
    </recommendedName>
    <alternativeName>
        <fullName evidence="2">30S ribosomal protein S8</fullName>
    </alternativeName>
</protein>
<feature type="chain" id="PRO_0000290930" description="Small ribosomal subunit protein uS8">
    <location>
        <begin position="1"/>
        <end position="130"/>
    </location>
</feature>
<name>RS8_SHESM</name>